<sequence length="108" mass="11948">MLKTTLLFFVTALCEIIGCFLPWLWLKRGASVWWLLPAAASLALFVWLLTLHPAASGRVYAAYGGVYVCTALLWLRVVDGVRLTVYDWCGALIALCGMLIIVVGWGRT</sequence>
<keyword id="KW-0997">Cell inner membrane</keyword>
<keyword id="KW-1003">Cell membrane</keyword>
<keyword id="KW-0472">Membrane</keyword>
<keyword id="KW-0812">Transmembrane</keyword>
<keyword id="KW-1133">Transmembrane helix</keyword>
<evidence type="ECO:0000255" key="1">
    <source>
        <dbReference type="HAMAP-Rule" id="MF_00010"/>
    </source>
</evidence>
<gene>
    <name evidence="1" type="primary">ynfA</name>
    <name type="ordered locus">SNSL254_A1615</name>
</gene>
<dbReference type="EMBL" id="CP001113">
    <property type="protein sequence ID" value="ACF61109.1"/>
    <property type="molecule type" value="Genomic_DNA"/>
</dbReference>
<dbReference type="RefSeq" id="WP_000921389.1">
    <property type="nucleotide sequence ID" value="NZ_CCMR01000003.1"/>
</dbReference>
<dbReference type="SMR" id="B4T5E1"/>
<dbReference type="KEGG" id="see:SNSL254_A1615"/>
<dbReference type="HOGENOM" id="CLU_117653_2_1_6"/>
<dbReference type="Proteomes" id="UP000008824">
    <property type="component" value="Chromosome"/>
</dbReference>
<dbReference type="GO" id="GO:0005886">
    <property type="term" value="C:plasma membrane"/>
    <property type="evidence" value="ECO:0007669"/>
    <property type="project" value="UniProtKB-SubCell"/>
</dbReference>
<dbReference type="HAMAP" id="MF_00010">
    <property type="entry name" value="UPF0060"/>
    <property type="match status" value="1"/>
</dbReference>
<dbReference type="InterPro" id="IPR003844">
    <property type="entry name" value="UPF0060"/>
</dbReference>
<dbReference type="NCBIfam" id="NF002586">
    <property type="entry name" value="PRK02237.1"/>
    <property type="match status" value="1"/>
</dbReference>
<dbReference type="PANTHER" id="PTHR36116">
    <property type="entry name" value="UPF0060 MEMBRANE PROTEIN YNFA"/>
    <property type="match status" value="1"/>
</dbReference>
<dbReference type="PANTHER" id="PTHR36116:SF1">
    <property type="entry name" value="UPF0060 MEMBRANE PROTEIN YNFA"/>
    <property type="match status" value="1"/>
</dbReference>
<dbReference type="Pfam" id="PF02694">
    <property type="entry name" value="UPF0060"/>
    <property type="match status" value="1"/>
</dbReference>
<dbReference type="SUPFAM" id="SSF103481">
    <property type="entry name" value="Multidrug resistance efflux transporter EmrE"/>
    <property type="match status" value="1"/>
</dbReference>
<organism>
    <name type="scientific">Salmonella newport (strain SL254)</name>
    <dbReference type="NCBI Taxonomy" id="423368"/>
    <lineage>
        <taxon>Bacteria</taxon>
        <taxon>Pseudomonadati</taxon>
        <taxon>Pseudomonadota</taxon>
        <taxon>Gammaproteobacteria</taxon>
        <taxon>Enterobacterales</taxon>
        <taxon>Enterobacteriaceae</taxon>
        <taxon>Salmonella</taxon>
    </lineage>
</organism>
<proteinExistence type="inferred from homology"/>
<protein>
    <recommendedName>
        <fullName evidence="1">UPF0060 membrane protein YnfA</fullName>
    </recommendedName>
</protein>
<accession>B4T5E1</accession>
<comment type="subcellular location">
    <subcellularLocation>
        <location evidence="1">Cell inner membrane</location>
        <topology evidence="1">Multi-pass membrane protein</topology>
    </subcellularLocation>
</comment>
<comment type="similarity">
    <text evidence="1">Belongs to the UPF0060 family.</text>
</comment>
<feature type="chain" id="PRO_1000089259" description="UPF0060 membrane protein YnfA">
    <location>
        <begin position="1"/>
        <end position="108"/>
    </location>
</feature>
<feature type="topological domain" description="Periplasmic" evidence="1">
    <location>
        <begin position="1"/>
        <end position="5"/>
    </location>
</feature>
<feature type="transmembrane region" description="Helical" evidence="1">
    <location>
        <begin position="6"/>
        <end position="26"/>
    </location>
</feature>
<feature type="topological domain" description="Cytoplasmic" evidence="1">
    <location>
        <begin position="27"/>
        <end position="30"/>
    </location>
</feature>
<feature type="transmembrane region" description="Helical" evidence="1">
    <location>
        <begin position="31"/>
        <end position="51"/>
    </location>
</feature>
<feature type="topological domain" description="Periplasmic" evidence="1">
    <location>
        <begin position="52"/>
        <end position="60"/>
    </location>
</feature>
<feature type="transmembrane region" description="Helical" evidence="1">
    <location>
        <begin position="61"/>
        <end position="81"/>
    </location>
</feature>
<feature type="topological domain" description="Cytoplasmic" evidence="1">
    <location>
        <begin position="82"/>
        <end position="84"/>
    </location>
</feature>
<feature type="transmembrane region" description="Helical" evidence="1">
    <location>
        <begin position="85"/>
        <end position="105"/>
    </location>
</feature>
<feature type="topological domain" description="Periplasmic" evidence="1">
    <location>
        <begin position="106"/>
        <end position="108"/>
    </location>
</feature>
<reference key="1">
    <citation type="journal article" date="2011" name="J. Bacteriol.">
        <title>Comparative genomics of 28 Salmonella enterica isolates: evidence for CRISPR-mediated adaptive sublineage evolution.</title>
        <authorList>
            <person name="Fricke W.F."/>
            <person name="Mammel M.K."/>
            <person name="McDermott P.F."/>
            <person name="Tartera C."/>
            <person name="White D.G."/>
            <person name="Leclerc J.E."/>
            <person name="Ravel J."/>
            <person name="Cebula T.A."/>
        </authorList>
    </citation>
    <scope>NUCLEOTIDE SEQUENCE [LARGE SCALE GENOMIC DNA]</scope>
    <source>
        <strain>SL254</strain>
    </source>
</reference>
<name>YNFA_SALNS</name>